<reference key="1">
    <citation type="journal article" date="2005" name="PLoS Biol.">
        <title>The genomes of Oryza sativa: a history of duplications.</title>
        <authorList>
            <person name="Yu J."/>
            <person name="Wang J."/>
            <person name="Lin W."/>
            <person name="Li S."/>
            <person name="Li H."/>
            <person name="Zhou J."/>
            <person name="Ni P."/>
            <person name="Dong W."/>
            <person name="Hu S."/>
            <person name="Zeng C."/>
            <person name="Zhang J."/>
            <person name="Zhang Y."/>
            <person name="Li R."/>
            <person name="Xu Z."/>
            <person name="Li S."/>
            <person name="Li X."/>
            <person name="Zheng H."/>
            <person name="Cong L."/>
            <person name="Lin L."/>
            <person name="Yin J."/>
            <person name="Geng J."/>
            <person name="Li G."/>
            <person name="Shi J."/>
            <person name="Liu J."/>
            <person name="Lv H."/>
            <person name="Li J."/>
            <person name="Wang J."/>
            <person name="Deng Y."/>
            <person name="Ran L."/>
            <person name="Shi X."/>
            <person name="Wang X."/>
            <person name="Wu Q."/>
            <person name="Li C."/>
            <person name="Ren X."/>
            <person name="Wang J."/>
            <person name="Wang X."/>
            <person name="Li D."/>
            <person name="Liu D."/>
            <person name="Zhang X."/>
            <person name="Ji Z."/>
            <person name="Zhao W."/>
            <person name="Sun Y."/>
            <person name="Zhang Z."/>
            <person name="Bao J."/>
            <person name="Han Y."/>
            <person name="Dong L."/>
            <person name="Ji J."/>
            <person name="Chen P."/>
            <person name="Wu S."/>
            <person name="Liu J."/>
            <person name="Xiao Y."/>
            <person name="Bu D."/>
            <person name="Tan J."/>
            <person name="Yang L."/>
            <person name="Ye C."/>
            <person name="Zhang J."/>
            <person name="Xu J."/>
            <person name="Zhou Y."/>
            <person name="Yu Y."/>
            <person name="Zhang B."/>
            <person name="Zhuang S."/>
            <person name="Wei H."/>
            <person name="Liu B."/>
            <person name="Lei M."/>
            <person name="Yu H."/>
            <person name="Li Y."/>
            <person name="Xu H."/>
            <person name="Wei S."/>
            <person name="He X."/>
            <person name="Fang L."/>
            <person name="Zhang Z."/>
            <person name="Zhang Y."/>
            <person name="Huang X."/>
            <person name="Su Z."/>
            <person name="Tong W."/>
            <person name="Li J."/>
            <person name="Tong Z."/>
            <person name="Li S."/>
            <person name="Ye J."/>
            <person name="Wang L."/>
            <person name="Fang L."/>
            <person name="Lei T."/>
            <person name="Chen C.-S."/>
            <person name="Chen H.-C."/>
            <person name="Xu Z."/>
            <person name="Li H."/>
            <person name="Huang H."/>
            <person name="Zhang F."/>
            <person name="Xu H."/>
            <person name="Li N."/>
            <person name="Zhao C."/>
            <person name="Li S."/>
            <person name="Dong L."/>
            <person name="Huang Y."/>
            <person name="Li L."/>
            <person name="Xi Y."/>
            <person name="Qi Q."/>
            <person name="Li W."/>
            <person name="Zhang B."/>
            <person name="Hu W."/>
            <person name="Zhang Y."/>
            <person name="Tian X."/>
            <person name="Jiao Y."/>
            <person name="Liang X."/>
            <person name="Jin J."/>
            <person name="Gao L."/>
            <person name="Zheng W."/>
            <person name="Hao B."/>
            <person name="Liu S.-M."/>
            <person name="Wang W."/>
            <person name="Yuan L."/>
            <person name="Cao M."/>
            <person name="McDermott J."/>
            <person name="Samudrala R."/>
            <person name="Wang J."/>
            <person name="Wong G.K.-S."/>
            <person name="Yang H."/>
        </authorList>
    </citation>
    <scope>NUCLEOTIDE SEQUENCE [LARGE SCALE GENOMIC DNA]</scope>
    <source>
        <strain>cv. 93-11</strain>
    </source>
</reference>
<dbReference type="EC" id="1.14.14.137" evidence="2"/>
<dbReference type="EMBL" id="CM000134">
    <property type="protein sequence ID" value="EAZ09373.1"/>
    <property type="molecule type" value="Genomic_DNA"/>
</dbReference>
<dbReference type="SMR" id="A2Z212"/>
<dbReference type="STRING" id="39946.A2Z212"/>
<dbReference type="EnsemblPlants" id="BGIOSGA029635-TA">
    <property type="protein sequence ID" value="BGIOSGA029635-PA"/>
    <property type="gene ID" value="BGIOSGA029635"/>
</dbReference>
<dbReference type="EnsemblPlants" id="OsGoSa_09g0012730.01">
    <property type="protein sequence ID" value="OsGoSa_09g0012730.01"/>
    <property type="gene ID" value="OsGoSa_09g0012730"/>
</dbReference>
<dbReference type="EnsemblPlants" id="OsIR64_09g0012860.01">
    <property type="protein sequence ID" value="OsIR64_09g0012860.01"/>
    <property type="gene ID" value="OsIR64_09g0012860"/>
</dbReference>
<dbReference type="EnsemblPlants" id="OsKYG_09g0012640.01">
    <property type="protein sequence ID" value="OsKYG_09g0012640.01"/>
    <property type="gene ID" value="OsKYG_09g0012640"/>
</dbReference>
<dbReference type="EnsemblPlants" id="OsLaMu_09g0012650.01">
    <property type="protein sequence ID" value="OsLaMu_09g0012650.01"/>
    <property type="gene ID" value="OsLaMu_09g0012650"/>
</dbReference>
<dbReference type="EnsemblPlants" id="OsLima_09g0012840.01">
    <property type="protein sequence ID" value="OsLima_09g0012840.01"/>
    <property type="gene ID" value="OsLima_09g0012840"/>
</dbReference>
<dbReference type="EnsemblPlants" id="OsMH63_09G013290_01">
    <property type="protein sequence ID" value="OsMH63_09G013290_01"/>
    <property type="gene ID" value="OsMH63_09G013290"/>
</dbReference>
<dbReference type="EnsemblPlants" id="OsPr106_09g0012950.01">
    <property type="protein sequence ID" value="OsPr106_09g0012950.01"/>
    <property type="gene ID" value="OsPr106_09g0012950"/>
</dbReference>
<dbReference type="EnsemblPlants" id="OsZS97_09G012890_01">
    <property type="protein sequence ID" value="OsZS97_09G012890_01"/>
    <property type="gene ID" value="OsZS97_09G012890"/>
</dbReference>
<dbReference type="Gramene" id="BGIOSGA029635-TA">
    <property type="protein sequence ID" value="BGIOSGA029635-PA"/>
    <property type="gene ID" value="BGIOSGA029635"/>
</dbReference>
<dbReference type="Gramene" id="OsGoSa_09g0012730.01">
    <property type="protein sequence ID" value="OsGoSa_09g0012730.01"/>
    <property type="gene ID" value="OsGoSa_09g0012730"/>
</dbReference>
<dbReference type="Gramene" id="OsIR64_09g0012860.01">
    <property type="protein sequence ID" value="OsIR64_09g0012860.01"/>
    <property type="gene ID" value="OsIR64_09g0012860"/>
</dbReference>
<dbReference type="Gramene" id="OsKYG_09g0012640.01">
    <property type="protein sequence ID" value="OsKYG_09g0012640.01"/>
    <property type="gene ID" value="OsKYG_09g0012640"/>
</dbReference>
<dbReference type="Gramene" id="OsLaMu_09g0012650.01">
    <property type="protein sequence ID" value="OsLaMu_09g0012650.01"/>
    <property type="gene ID" value="OsLaMu_09g0012650"/>
</dbReference>
<dbReference type="Gramene" id="OsLima_09g0012840.01">
    <property type="protein sequence ID" value="OsLima_09g0012840.01"/>
    <property type="gene ID" value="OsLima_09g0012840"/>
</dbReference>
<dbReference type="Gramene" id="OsMH63_09G013290_01">
    <property type="protein sequence ID" value="OsMH63_09G013290_01"/>
    <property type="gene ID" value="OsMH63_09G013290"/>
</dbReference>
<dbReference type="Gramene" id="OsPr106_09g0012950.01">
    <property type="protein sequence ID" value="OsPr106_09g0012950.01"/>
    <property type="gene ID" value="OsPr106_09g0012950"/>
</dbReference>
<dbReference type="Gramene" id="OsZS97_09G012890_01">
    <property type="protein sequence ID" value="OsZS97_09G012890_01"/>
    <property type="gene ID" value="OsZS97_09G012890"/>
</dbReference>
<dbReference type="HOGENOM" id="CLU_001570_15_5_1"/>
<dbReference type="OMA" id="TPPFHGK"/>
<dbReference type="OrthoDB" id="1372046at2759"/>
<dbReference type="UniPathway" id="UPA00093"/>
<dbReference type="Proteomes" id="UP000007015">
    <property type="component" value="Chromosome 9"/>
</dbReference>
<dbReference type="GO" id="GO:0016020">
    <property type="term" value="C:membrane"/>
    <property type="evidence" value="ECO:0007669"/>
    <property type="project" value="UniProtKB-SubCell"/>
</dbReference>
<dbReference type="GO" id="GO:0010295">
    <property type="term" value="F:(+)-abscisic acid 8'-hydroxylase activity"/>
    <property type="evidence" value="ECO:0007669"/>
    <property type="project" value="UniProtKB-EC"/>
</dbReference>
<dbReference type="GO" id="GO:0020037">
    <property type="term" value="F:heme binding"/>
    <property type="evidence" value="ECO:0007669"/>
    <property type="project" value="InterPro"/>
</dbReference>
<dbReference type="GO" id="GO:0005506">
    <property type="term" value="F:iron ion binding"/>
    <property type="evidence" value="ECO:0007669"/>
    <property type="project" value="InterPro"/>
</dbReference>
<dbReference type="GO" id="GO:0046345">
    <property type="term" value="P:abscisic acid catabolic process"/>
    <property type="evidence" value="ECO:0007669"/>
    <property type="project" value="UniProtKB-UniPathway"/>
</dbReference>
<dbReference type="GO" id="GO:0016125">
    <property type="term" value="P:sterol metabolic process"/>
    <property type="evidence" value="ECO:0007669"/>
    <property type="project" value="TreeGrafter"/>
</dbReference>
<dbReference type="CDD" id="cd11043">
    <property type="entry name" value="CYP90-like"/>
    <property type="match status" value="1"/>
</dbReference>
<dbReference type="FunFam" id="1.10.630.10:FF:000014">
    <property type="entry name" value="Abscisic acid 8"/>
    <property type="match status" value="1"/>
</dbReference>
<dbReference type="Gene3D" id="1.10.630.10">
    <property type="entry name" value="Cytochrome P450"/>
    <property type="match status" value="1"/>
</dbReference>
<dbReference type="InterPro" id="IPR001128">
    <property type="entry name" value="Cyt_P450"/>
</dbReference>
<dbReference type="InterPro" id="IPR017972">
    <property type="entry name" value="Cyt_P450_CS"/>
</dbReference>
<dbReference type="InterPro" id="IPR002401">
    <property type="entry name" value="Cyt_P450_E_grp-I"/>
</dbReference>
<dbReference type="InterPro" id="IPR036396">
    <property type="entry name" value="Cyt_P450_sf"/>
</dbReference>
<dbReference type="PANTHER" id="PTHR24286:SF376">
    <property type="entry name" value="ABSCISIC ACID 8'-HYDROXYLASE 4"/>
    <property type="match status" value="1"/>
</dbReference>
<dbReference type="PANTHER" id="PTHR24286">
    <property type="entry name" value="CYTOCHROME P450 26"/>
    <property type="match status" value="1"/>
</dbReference>
<dbReference type="Pfam" id="PF00067">
    <property type="entry name" value="p450"/>
    <property type="match status" value="1"/>
</dbReference>
<dbReference type="PRINTS" id="PR00463">
    <property type="entry name" value="EP450I"/>
</dbReference>
<dbReference type="PRINTS" id="PR00385">
    <property type="entry name" value="P450"/>
</dbReference>
<dbReference type="SUPFAM" id="SSF48264">
    <property type="entry name" value="Cytochrome P450"/>
    <property type="match status" value="1"/>
</dbReference>
<dbReference type="PROSITE" id="PS00086">
    <property type="entry name" value="CYTOCHROME_P450"/>
    <property type="match status" value="1"/>
</dbReference>
<sequence length="500" mass="56158">MAASFVIVIVISFFISLAFMCYVHYTSRQRRKLHGYGHEKAVRLPPGSMGWPYIGETLQLYSQDPNVFFASKQKRYGEIFKTHILGCPCVMLASPEAARFVLVTQAHLFKPTYPRSKERMIGPSALFFNQGDYHLRLRKLVQGPLGPDALRALVPDVEAAVRSTLASWDGNVSSTFHAMKRLSFDVGIVTIFGGRLDERRKAELRQNYAIVEKGYNSFPNSFPGTLYYKAIQARRRLHGVLSDIMRERRARGEPGSDLLGCLMQSRAGDDGALLTDEQVADNIIGVLFAAQDTTASVLTWIVKYLHDHPKLLEAVRAEQAAIRAANDGGRLPLTWAQTRSMALTHKVILESLRMASIISFTFREAVADVEYKGFLIPKGWKVMPLFRNIHHNPDYFQDPQKFDPSRFKVSPRPNTFMPFGNGVHACPGNELAKLEMLVLIHHLVTGYRWEIVGSSDEVEYSPFPVPKHGLLAKLWRDDTVSVETDGCQNGDNDDNGVAMV</sequence>
<feature type="chain" id="PRO_0000288647" description="Abscisic acid 8'-hydroxylase 3">
    <location>
        <begin position="1"/>
        <end position="500"/>
    </location>
</feature>
<feature type="transmembrane region" description="Helical" evidence="3">
    <location>
        <begin position="3"/>
        <end position="23"/>
    </location>
</feature>
<feature type="binding site" description="axial binding residue" evidence="1">
    <location>
        <position position="426"/>
    </location>
    <ligand>
        <name>heme</name>
        <dbReference type="ChEBI" id="CHEBI:30413"/>
    </ligand>
    <ligandPart>
        <name>Fe</name>
        <dbReference type="ChEBI" id="CHEBI:18248"/>
    </ligandPart>
</feature>
<keyword id="KW-0349">Heme</keyword>
<keyword id="KW-0408">Iron</keyword>
<keyword id="KW-0472">Membrane</keyword>
<keyword id="KW-0479">Metal-binding</keyword>
<keyword id="KW-0503">Monooxygenase</keyword>
<keyword id="KW-0560">Oxidoreductase</keyword>
<keyword id="KW-1185">Reference proteome</keyword>
<keyword id="KW-0812">Transmembrane</keyword>
<keyword id="KW-1133">Transmembrane helix</keyword>
<organism>
    <name type="scientific">Oryza sativa subsp. indica</name>
    <name type="common">Rice</name>
    <dbReference type="NCBI Taxonomy" id="39946"/>
    <lineage>
        <taxon>Eukaryota</taxon>
        <taxon>Viridiplantae</taxon>
        <taxon>Streptophyta</taxon>
        <taxon>Embryophyta</taxon>
        <taxon>Tracheophyta</taxon>
        <taxon>Spermatophyta</taxon>
        <taxon>Magnoliopsida</taxon>
        <taxon>Liliopsida</taxon>
        <taxon>Poales</taxon>
        <taxon>Poaceae</taxon>
        <taxon>BOP clade</taxon>
        <taxon>Oryzoideae</taxon>
        <taxon>Oryzeae</taxon>
        <taxon>Oryzinae</taxon>
        <taxon>Oryza</taxon>
        <taxon>Oryza sativa</taxon>
    </lineage>
</organism>
<evidence type="ECO:0000250" key="1"/>
<evidence type="ECO:0000250" key="2">
    <source>
        <dbReference type="UniProtKB" id="Q949P1"/>
    </source>
</evidence>
<evidence type="ECO:0000255" key="3"/>
<evidence type="ECO:0000305" key="4"/>
<accession>A2Z212</accession>
<proteinExistence type="inferred from homology"/>
<name>ABAH3_ORYSI</name>
<comment type="function">
    <text evidence="1">Involved in the oxidative degradation of abscisic acid.</text>
</comment>
<comment type="catalytic activity">
    <reaction evidence="2">
        <text>2-cis-(+)-abscisate + reduced [NADPH--hemoprotein reductase] + O2 = (+)-8'-hydroxyabscisate + oxidized [NADPH--hemoprotein reductase] + H2O + H(+)</text>
        <dbReference type="Rhea" id="RHEA:12897"/>
        <dbReference type="Rhea" id="RHEA-COMP:11964"/>
        <dbReference type="Rhea" id="RHEA-COMP:11965"/>
        <dbReference type="ChEBI" id="CHEBI:15377"/>
        <dbReference type="ChEBI" id="CHEBI:15378"/>
        <dbReference type="ChEBI" id="CHEBI:15379"/>
        <dbReference type="ChEBI" id="CHEBI:37569"/>
        <dbReference type="ChEBI" id="CHEBI:57618"/>
        <dbReference type="ChEBI" id="CHEBI:58210"/>
        <dbReference type="ChEBI" id="CHEBI:58490"/>
        <dbReference type="EC" id="1.14.14.137"/>
    </reaction>
</comment>
<comment type="cofactor">
    <cofactor evidence="1">
        <name>heme</name>
        <dbReference type="ChEBI" id="CHEBI:30413"/>
    </cofactor>
</comment>
<comment type="pathway">
    <text>Plant hormone degradation; abscisic acid degradation.</text>
</comment>
<comment type="subcellular location">
    <subcellularLocation>
        <location evidence="4">Membrane</location>
        <topology evidence="4">Single-pass membrane protein</topology>
    </subcellularLocation>
</comment>
<comment type="similarity">
    <text evidence="4">Belongs to the cytochrome P450 family.</text>
</comment>
<gene>
    <name type="primary">CYP707A7</name>
    <name type="synonym">ABA8OX3</name>
    <name type="ORF">OsI_030605</name>
</gene>
<protein>
    <recommendedName>
        <fullName>Abscisic acid 8'-hydroxylase 3</fullName>
        <shortName>ABA 8'-hydroxylase 3</shortName>
        <ecNumber evidence="2">1.14.14.137</ecNumber>
    </recommendedName>
    <alternativeName>
        <fullName>Cytochrome P450 707A7</fullName>
    </alternativeName>
    <alternativeName>
        <fullName>OsABA8ox3</fullName>
    </alternativeName>
</protein>